<dbReference type="EMBL" id="U29579">
    <property type="protein sequence ID" value="AAA69258.1"/>
    <property type="molecule type" value="Genomic_DNA"/>
</dbReference>
<dbReference type="EMBL" id="U00096">
    <property type="protein sequence ID" value="AAC75790.1"/>
    <property type="molecule type" value="Genomic_DNA"/>
</dbReference>
<dbReference type="EMBL" id="AP009048">
    <property type="protein sequence ID" value="BAE76825.1"/>
    <property type="molecule type" value="Genomic_DNA"/>
</dbReference>
<dbReference type="PIR" id="H65055">
    <property type="entry name" value="H65055"/>
</dbReference>
<dbReference type="RefSeq" id="NP_417228.1">
    <property type="nucleotide sequence ID" value="NC_000913.3"/>
</dbReference>
<dbReference type="RefSeq" id="WP_000517476.1">
    <property type="nucleotide sequence ID" value="NZ_STEB01000027.1"/>
</dbReference>
<dbReference type="PDB" id="4IFF">
    <property type="method" value="X-ray"/>
    <property type="resolution" value="2.30 A"/>
    <property type="chains" value="A/B/C/D=28-63"/>
</dbReference>
<dbReference type="PDB" id="5Z2W">
    <property type="method" value="X-ray"/>
    <property type="resolution" value="3.00 A"/>
    <property type="chains" value="B=61-95"/>
</dbReference>
<dbReference type="PDB" id="6H9O">
    <property type="method" value="X-ray"/>
    <property type="resolution" value="2.80 A"/>
    <property type="chains" value="B/D=64-87"/>
</dbReference>
<dbReference type="PDB" id="8HHF">
    <property type="method" value="X-ray"/>
    <property type="resolution" value="3.04 A"/>
    <property type="chains" value="B=1-103"/>
</dbReference>
<dbReference type="PDB" id="8HHG">
    <property type="method" value="X-ray"/>
    <property type="resolution" value="3.10 A"/>
    <property type="chains" value="B=1-103"/>
</dbReference>
<dbReference type="PDB" id="8HHH">
    <property type="method" value="X-ray"/>
    <property type="resolution" value="3.30 A"/>
    <property type="chains" value="B=1-103"/>
</dbReference>
<dbReference type="PDBsum" id="4IFF"/>
<dbReference type="PDBsum" id="5Z2W"/>
<dbReference type="PDBsum" id="6H9O"/>
<dbReference type="PDBsum" id="8HHF"/>
<dbReference type="PDBsum" id="8HHG"/>
<dbReference type="PDBsum" id="8HHH"/>
<dbReference type="SASBDB" id="P0A6S5"/>
<dbReference type="SMR" id="P0A6S5"/>
<dbReference type="BioGRID" id="4262281">
    <property type="interactions" value="274"/>
</dbReference>
<dbReference type="BioGRID" id="850394">
    <property type="interactions" value="2"/>
</dbReference>
<dbReference type="ComplexPortal" id="CPX-3099">
    <property type="entry name" value="FtsQBL complex"/>
</dbReference>
<dbReference type="ComplexPortal" id="CPX-3299">
    <property type="entry name" value="FtsBL complex"/>
</dbReference>
<dbReference type="DIP" id="DIP-12117N"/>
<dbReference type="FunCoup" id="P0A6S5">
    <property type="interactions" value="65"/>
</dbReference>
<dbReference type="IntAct" id="P0A6S5">
    <property type="interactions" value="8"/>
</dbReference>
<dbReference type="STRING" id="511145.b2748"/>
<dbReference type="PaxDb" id="511145-b2748"/>
<dbReference type="EnsemblBacteria" id="AAC75790">
    <property type="protein sequence ID" value="AAC75790"/>
    <property type="gene ID" value="b2748"/>
</dbReference>
<dbReference type="GeneID" id="93779258"/>
<dbReference type="GeneID" id="946033"/>
<dbReference type="KEGG" id="ecj:JW2718"/>
<dbReference type="KEGG" id="eco:b2748"/>
<dbReference type="KEGG" id="ecoc:C3026_15110"/>
<dbReference type="PATRIC" id="fig|1411691.4.peg.3992"/>
<dbReference type="EchoBASE" id="EB2914"/>
<dbReference type="eggNOG" id="COG2919">
    <property type="taxonomic scope" value="Bacteria"/>
</dbReference>
<dbReference type="HOGENOM" id="CLU_134863_5_2_6"/>
<dbReference type="InParanoid" id="P0A6S5"/>
<dbReference type="OMA" id="YELGMVK"/>
<dbReference type="OrthoDB" id="7061211at2"/>
<dbReference type="PhylomeDB" id="P0A6S5"/>
<dbReference type="BioCyc" id="EcoCyc:G7424-MONOMER"/>
<dbReference type="EvolutionaryTrace" id="P0A6S5"/>
<dbReference type="PRO" id="PR:P0A6S5"/>
<dbReference type="Proteomes" id="UP000000625">
    <property type="component" value="Chromosome"/>
</dbReference>
<dbReference type="GO" id="GO:0032153">
    <property type="term" value="C:cell division site"/>
    <property type="evidence" value="ECO:0000303"/>
    <property type="project" value="ComplexPortal"/>
</dbReference>
<dbReference type="GO" id="GO:0030428">
    <property type="term" value="C:cell septum"/>
    <property type="evidence" value="ECO:0000314"/>
    <property type="project" value="EcoliWiki"/>
</dbReference>
<dbReference type="GO" id="GO:1990586">
    <property type="term" value="C:divisome complex"/>
    <property type="evidence" value="ECO:0000353"/>
    <property type="project" value="ComplexPortal"/>
</dbReference>
<dbReference type="GO" id="GO:1990588">
    <property type="term" value="C:FtsBL complex"/>
    <property type="evidence" value="ECO:0000303"/>
    <property type="project" value="ComplexPortal"/>
</dbReference>
<dbReference type="GO" id="GO:1990587">
    <property type="term" value="C:FtsQBL complex"/>
    <property type="evidence" value="ECO:0000353"/>
    <property type="project" value="ComplexPortal"/>
</dbReference>
<dbReference type="GO" id="GO:0005886">
    <property type="term" value="C:plasma membrane"/>
    <property type="evidence" value="ECO:0000303"/>
    <property type="project" value="ComplexPortal"/>
</dbReference>
<dbReference type="GO" id="GO:0042802">
    <property type="term" value="F:identical protein binding"/>
    <property type="evidence" value="ECO:0000314"/>
    <property type="project" value="EcoCyc"/>
</dbReference>
<dbReference type="GO" id="GO:0051301">
    <property type="term" value="P:cell division"/>
    <property type="evidence" value="ECO:0000315"/>
    <property type="project" value="EcoliWiki"/>
</dbReference>
<dbReference type="GO" id="GO:0000917">
    <property type="term" value="P:division septum assembly"/>
    <property type="evidence" value="ECO:0000303"/>
    <property type="project" value="ComplexPortal"/>
</dbReference>
<dbReference type="GO" id="GO:0043093">
    <property type="term" value="P:FtsZ-dependent cytokinesis"/>
    <property type="evidence" value="ECO:0000315"/>
    <property type="project" value="EcoCyc"/>
</dbReference>
<dbReference type="FunFam" id="1.20.5.400:FF:000001">
    <property type="entry name" value="Cell division protein FtsB"/>
    <property type="match status" value="1"/>
</dbReference>
<dbReference type="Gene3D" id="1.20.5.400">
    <property type="match status" value="1"/>
</dbReference>
<dbReference type="HAMAP" id="MF_00599">
    <property type="entry name" value="FtsB"/>
    <property type="match status" value="1"/>
</dbReference>
<dbReference type="InterPro" id="IPR023081">
    <property type="entry name" value="Cell_div_FtsB"/>
</dbReference>
<dbReference type="InterPro" id="IPR007060">
    <property type="entry name" value="FtsL/DivIC"/>
</dbReference>
<dbReference type="NCBIfam" id="NF002058">
    <property type="entry name" value="PRK00888.1"/>
    <property type="match status" value="1"/>
</dbReference>
<dbReference type="PANTHER" id="PTHR37485">
    <property type="entry name" value="CELL DIVISION PROTEIN FTSB"/>
    <property type="match status" value="1"/>
</dbReference>
<dbReference type="PANTHER" id="PTHR37485:SF1">
    <property type="entry name" value="CELL DIVISION PROTEIN FTSB"/>
    <property type="match status" value="1"/>
</dbReference>
<dbReference type="Pfam" id="PF04977">
    <property type="entry name" value="DivIC"/>
    <property type="match status" value="1"/>
</dbReference>
<name>FTSB_ECOLI</name>
<accession>P0A6S5</accession>
<accession>Q2MA81</accession>
<accession>Q46894</accession>
<gene>
    <name evidence="1" type="primary">ftsB</name>
    <name type="synonym">ygbQ</name>
    <name type="ordered locus">b2748</name>
    <name type="ordered locus">JW2718</name>
</gene>
<feature type="chain" id="PRO_0000214441" description="Cell division protein FtsB">
    <location>
        <begin position="1"/>
        <end position="103"/>
    </location>
</feature>
<feature type="topological domain" description="Cytoplasmic" evidence="1">
    <location>
        <begin position="1"/>
        <end position="3"/>
    </location>
</feature>
<feature type="transmembrane region" description="Helical" evidence="1">
    <location>
        <begin position="4"/>
        <end position="21"/>
    </location>
</feature>
<feature type="topological domain" description="Periplasmic" evidence="1">
    <location>
        <begin position="22"/>
        <end position="103"/>
    </location>
</feature>
<feature type="coiled-coil region" evidence="1">
    <location>
        <begin position="31"/>
        <end position="71"/>
    </location>
</feature>
<feature type="short sequence motif" description="Leucine zipper-like">
    <location>
        <begin position="41"/>
        <end position="72"/>
    </location>
</feature>
<feature type="helix" evidence="10">
    <location>
        <begin position="2"/>
        <end position="20"/>
    </location>
</feature>
<feature type="strand" evidence="10">
    <location>
        <begin position="21"/>
        <end position="25"/>
    </location>
</feature>
<feature type="helix" evidence="7">
    <location>
        <begin position="28"/>
        <end position="59"/>
    </location>
</feature>
<feature type="helix" evidence="9">
    <location>
        <begin position="65"/>
        <end position="73"/>
    </location>
</feature>
<feature type="strand" evidence="9">
    <location>
        <begin position="82"/>
        <end position="86"/>
    </location>
</feature>
<feature type="strand" evidence="8">
    <location>
        <begin position="88"/>
        <end position="90"/>
    </location>
</feature>
<reference key="1">
    <citation type="journal article" date="1997" name="Science">
        <title>The complete genome sequence of Escherichia coli K-12.</title>
        <authorList>
            <person name="Blattner F.R."/>
            <person name="Plunkett G. III"/>
            <person name="Bloch C.A."/>
            <person name="Perna N.T."/>
            <person name="Burland V."/>
            <person name="Riley M."/>
            <person name="Collado-Vides J."/>
            <person name="Glasner J.D."/>
            <person name="Rode C.K."/>
            <person name="Mayhew G.F."/>
            <person name="Gregor J."/>
            <person name="Davis N.W."/>
            <person name="Kirkpatrick H.A."/>
            <person name="Goeden M.A."/>
            <person name="Rose D.J."/>
            <person name="Mau B."/>
            <person name="Shao Y."/>
        </authorList>
    </citation>
    <scope>NUCLEOTIDE SEQUENCE [LARGE SCALE GENOMIC DNA]</scope>
    <source>
        <strain>K12 / MG1655 / ATCC 47076</strain>
    </source>
</reference>
<reference key="2">
    <citation type="journal article" date="2006" name="Mol. Syst. Biol.">
        <title>Highly accurate genome sequences of Escherichia coli K-12 strains MG1655 and W3110.</title>
        <authorList>
            <person name="Hayashi K."/>
            <person name="Morooka N."/>
            <person name="Yamamoto Y."/>
            <person name="Fujita K."/>
            <person name="Isono K."/>
            <person name="Choi S."/>
            <person name="Ohtsubo E."/>
            <person name="Baba T."/>
            <person name="Wanner B.L."/>
            <person name="Mori H."/>
            <person name="Horiuchi T."/>
        </authorList>
    </citation>
    <scope>NUCLEOTIDE SEQUENCE [LARGE SCALE GENOMIC DNA]</scope>
    <source>
        <strain>K12 / W3110 / ATCC 27325 / DSM 5911</strain>
    </source>
</reference>
<reference key="3">
    <citation type="journal article" date="2002" name="Proc. Natl. Acad. Sci. U.S.A.">
        <title>YgbQ, a cell division protein in Escherichia coli and Vibrio cholerae, localizes in codependent fashion with FtsL to the division site.</title>
        <authorList>
            <person name="Buddelmeijer N."/>
            <person name="Judson N."/>
            <person name="Boyd D."/>
            <person name="Mekalanos J.J."/>
            <person name="Beckwith J."/>
        </authorList>
    </citation>
    <scope>FUNCTION</scope>
    <scope>SUBCELLULAR LOCATION</scope>
    <scope>INTERACTION WITH FTSL</scope>
    <scope>DISRUPTION PHENOTYPE</scope>
    <source>
        <strain>K12 / MC4100 / ATCC 35695 / DSM 6574</strain>
    </source>
</reference>
<reference key="4">
    <citation type="journal article" date="2004" name="Mol. Microbiol.">
        <title>A complex of the Escherichia coli cell division proteins FtsL, FtsB and FtsQ forms independently of its localization to the septal region.</title>
        <authorList>
            <person name="Buddelmeijer N."/>
            <person name="Beckwith J."/>
        </authorList>
    </citation>
    <scope>SUBUNIT</scope>
    <scope>SUBCELLULAR LOCATION</scope>
    <source>
        <strain>K12 / MC4100 / ATCC 35695 / DSM 6574</strain>
    </source>
</reference>
<reference key="5">
    <citation type="journal article" date="2005" name="J. Bacteriol.">
        <title>Interaction network among Escherichia coli membrane proteins involved in cell division as revealed by bacterial two-hybrid analysis.</title>
        <authorList>
            <person name="Karimova G."/>
            <person name="Dautin N."/>
            <person name="Ladant D."/>
        </authorList>
    </citation>
    <scope>INTERACTION WITH FTSL; FTSQ; FTSI AND FTSN</scope>
    <source>
        <strain>K12</strain>
    </source>
</reference>
<reference key="6">
    <citation type="journal article" date="2009" name="J. Bacteriol.">
        <title>Divisome under construction: distinct domains of the small membrane protein FtsB are necessary for interaction with multiple cell division proteins.</title>
        <authorList>
            <person name="Gonzalez M.D."/>
            <person name="Beckwith J."/>
        </authorList>
    </citation>
    <scope>FUNCTION</scope>
    <scope>SUBUNIT</scope>
    <scope>INTERACTION WITH FTSL AND FTSQ</scope>
    <scope>DOMAIN</scope>
    <source>
        <strain>K12 / MC4100 / ATCC 35695 / DSM 6574</strain>
    </source>
</reference>
<reference key="7">
    <citation type="journal article" date="2011" name="BMC Struct. Biol.">
        <title>A model for the Escherichia coli FtsB/FtsL/FtsQ cell division complex.</title>
        <authorList>
            <person name="Villanelo F."/>
            <person name="Ordenes A."/>
            <person name="Brunet J."/>
            <person name="Lagos R."/>
            <person name="Monasterio O."/>
        </authorList>
    </citation>
    <scope>3D-STRUCTURE MODELING OF THE FTSB/FTSL/FTSQ COMPLEX</scope>
</reference>
<reference key="8">
    <citation type="journal article" date="2011" name="J. Bacteriol.">
        <title>Role of leucine zipper motifs in association of the Escherichia coli cell division proteins FtsL and FtsB.</title>
        <authorList>
            <person name="Robichon C."/>
            <person name="Karimova G."/>
            <person name="Beckwith J."/>
            <person name="Ladant D."/>
        </authorList>
    </citation>
    <scope>DOMAIN</scope>
    <scope>LEUCINE ZIPPER-LIKE MOTIF</scope>
</reference>
<evidence type="ECO:0000255" key="1">
    <source>
        <dbReference type="HAMAP-Rule" id="MF_00599"/>
    </source>
</evidence>
<evidence type="ECO:0000269" key="2">
    <source>
    </source>
</evidence>
<evidence type="ECO:0000269" key="3">
    <source>
    </source>
</evidence>
<evidence type="ECO:0000269" key="4">
    <source>
    </source>
</evidence>
<evidence type="ECO:0000269" key="5">
    <source>
    </source>
</evidence>
<evidence type="ECO:0000269" key="6">
    <source>
    </source>
</evidence>
<evidence type="ECO:0007829" key="7">
    <source>
        <dbReference type="PDB" id="4IFF"/>
    </source>
</evidence>
<evidence type="ECO:0007829" key="8">
    <source>
        <dbReference type="PDB" id="5Z2W"/>
    </source>
</evidence>
<evidence type="ECO:0007829" key="9">
    <source>
        <dbReference type="PDB" id="6H9O"/>
    </source>
</evidence>
<evidence type="ECO:0007829" key="10">
    <source>
        <dbReference type="PDB" id="8HHF"/>
    </source>
</evidence>
<organism>
    <name type="scientific">Escherichia coli (strain K12)</name>
    <dbReference type="NCBI Taxonomy" id="83333"/>
    <lineage>
        <taxon>Bacteria</taxon>
        <taxon>Pseudomonadati</taxon>
        <taxon>Pseudomonadota</taxon>
        <taxon>Gammaproteobacteria</taxon>
        <taxon>Enterobacterales</taxon>
        <taxon>Enterobacteriaceae</taxon>
        <taxon>Escherichia</taxon>
    </lineage>
</organism>
<sequence length="103" mass="11622">MGKLTLLLLAILVWLQYSLWFGKNGIHDYTRVNDDVAAQQATNAKLKARNDQLFAEIDDLNGGQEALEERARNELSMTRPGETFYRLVPDASKRAQSAGQNNR</sequence>
<comment type="function">
    <text evidence="1 2 5">Essential cell division protein. May link together the upstream cell division proteins, which are predominantly cytoplasmic, with the downstream cell division proteins, which are predominantly periplasmic.</text>
</comment>
<comment type="subunit">
    <text evidence="1 2 3 4 5">Part of a complex composed of FtsB, FtsL and FtsQ. The complex can be formed before its localization to the division site. This tripartite complex can be divided further into a subcomplex of FtsB and FtsL, which forms in the absence of FtsQ. Also interacts with FtsI and FtsN.</text>
</comment>
<comment type="interaction">
    <interactant intactId="EBI-1113953">
        <id>P0A6S5</id>
    </interactant>
    <interactant intactId="EBI-1119082">
        <id>P0AEN4</id>
        <label>ftsL</label>
    </interactant>
    <organismsDiffer>false</organismsDiffer>
    <experiments>18</experiments>
</comment>
<comment type="interaction">
    <interactant intactId="EBI-1113953">
        <id>P0A6S5</id>
    </interactant>
    <interactant intactId="EBI-1130157">
        <id>P06136</id>
        <label>ftsQ</label>
    </interactant>
    <organismsDiffer>false</organismsDiffer>
    <experiments>10</experiments>
</comment>
<comment type="subcellular location">
    <subcellularLocation>
        <location evidence="1 2 3">Cell inner membrane</location>
        <topology evidence="1 2 3">Single-pass type II membrane protein</topology>
    </subcellularLocation>
    <text>Localizes to the division septum. Localization requires FtsQ and FtsL, but not FtsW and FtsI. Localization of FtsB and FtsL is codependent.</text>
</comment>
<comment type="domain">
    <text evidence="5 6">The transmembrane segment and the membrane-proximal periplasmic region, which forms a coiled-coil structure, are required for interaction with FtsL and recruitment of downstream division proteins. The C-terminal region is required for interaction with FtsQ, but is not required for recruitment of the downstream division protein FtsI. Contains a leucine zipper-like (LZ) motif, which is required for optimal interaction with FtsL.</text>
</comment>
<comment type="disruption phenotype">
    <text evidence="2">Mutants form long filaments, but DNA segregation is not affected.</text>
</comment>
<comment type="miscellaneous">
    <text>The C-terminal domain of FtsB is degraded in the absence of either FtsL or FtsQ.</text>
</comment>
<comment type="similarity">
    <text evidence="1">Belongs to the FtsB family.</text>
</comment>
<keyword id="KW-0002">3D-structure</keyword>
<keyword id="KW-0131">Cell cycle</keyword>
<keyword id="KW-0132">Cell division</keyword>
<keyword id="KW-0997">Cell inner membrane</keyword>
<keyword id="KW-1003">Cell membrane</keyword>
<keyword id="KW-0175">Coiled coil</keyword>
<keyword id="KW-0472">Membrane</keyword>
<keyword id="KW-1185">Reference proteome</keyword>
<keyword id="KW-0812">Transmembrane</keyword>
<keyword id="KW-1133">Transmembrane helix</keyword>
<protein>
    <recommendedName>
        <fullName evidence="1">Cell division protein FtsB</fullName>
    </recommendedName>
</protein>
<proteinExistence type="evidence at protein level"/>